<sequence>MTITQPDLSVFETVESEVRSYCRGWPTVFDRAVGSRMYDEDGHEYLDFFAGAGSLNYGHNNAVLKRALIDYLERDGVTHGLDMSTTAKRRFLETFQNTILRPRDLPYKVMFPGPTGTNAVESALKLARKVKGRESIVSFTNAFHGMSLGSLAVTGNAFKRAGAGIPLVHGTPMPFDNYFDGTVEDFIWFERLLEDQGSGLNKPAAVIVETVQGEGGINVARAEWLRALADLCERQDMLLIVDDIQMGCGRTGAFFSFEEAGITPDIVTVSKSISGYGMPMALTLFKPELDVWEPGEHNGTFRGNNPAFVTATATLEAYWADGSAMEKQTRKRGEQVEQHMIAITEENLADVKEYRGRGLVWGLEFHDKDRAGRVAKRAFELGLLIETSGPESEVVKLLPALTITPDELDEGMKTLARAVRETA</sequence>
<accession>Q93RW1</accession>
<gene>
    <name type="primary">ectB</name>
    <name type="ordered locus">SCO1865</name>
    <name type="ORF">SCI39.12</name>
</gene>
<dbReference type="EC" id="2.6.1.76"/>
<dbReference type="EMBL" id="AL939110">
    <property type="protein sequence ID" value="CAC38800.1"/>
    <property type="molecule type" value="Genomic_DNA"/>
</dbReference>
<dbReference type="RefSeq" id="NP_626132.1">
    <property type="nucleotide sequence ID" value="NC_003888.3"/>
</dbReference>
<dbReference type="RefSeq" id="WP_003976955.1">
    <property type="nucleotide sequence ID" value="NZ_VNID01000001.1"/>
</dbReference>
<dbReference type="SMR" id="Q93RW1"/>
<dbReference type="STRING" id="100226.gene:17759462"/>
<dbReference type="PaxDb" id="100226-SCO1865"/>
<dbReference type="GeneID" id="96651286"/>
<dbReference type="KEGG" id="sco:SCO1865"/>
<dbReference type="PATRIC" id="fig|100226.15.peg.1890"/>
<dbReference type="eggNOG" id="COG0160">
    <property type="taxonomic scope" value="Bacteria"/>
</dbReference>
<dbReference type="HOGENOM" id="CLU_016922_10_0_11"/>
<dbReference type="InParanoid" id="Q93RW1"/>
<dbReference type="OrthoDB" id="9801052at2"/>
<dbReference type="PhylomeDB" id="Q93RW1"/>
<dbReference type="UniPathway" id="UPA00067">
    <property type="reaction ID" value="UER00121"/>
</dbReference>
<dbReference type="Proteomes" id="UP000001973">
    <property type="component" value="Chromosome"/>
</dbReference>
<dbReference type="GO" id="GO:0045303">
    <property type="term" value="F:diaminobutyrate-2-oxoglutarate transaminase activity"/>
    <property type="evidence" value="ECO:0007669"/>
    <property type="project" value="UniProtKB-EC"/>
</dbReference>
<dbReference type="GO" id="GO:0047307">
    <property type="term" value="F:diaminobutyrate-pyruvate transaminase activity"/>
    <property type="evidence" value="ECO:0007669"/>
    <property type="project" value="InterPro"/>
</dbReference>
<dbReference type="GO" id="GO:0030170">
    <property type="term" value="F:pyridoxal phosphate binding"/>
    <property type="evidence" value="ECO:0007669"/>
    <property type="project" value="InterPro"/>
</dbReference>
<dbReference type="GO" id="GO:0008483">
    <property type="term" value="F:transaminase activity"/>
    <property type="evidence" value="ECO:0000318"/>
    <property type="project" value="GO_Central"/>
</dbReference>
<dbReference type="GO" id="GO:0019491">
    <property type="term" value="P:ectoine biosynthetic process"/>
    <property type="evidence" value="ECO:0007669"/>
    <property type="project" value="UniProtKB-UniPathway"/>
</dbReference>
<dbReference type="CDD" id="cd00610">
    <property type="entry name" value="OAT_like"/>
    <property type="match status" value="1"/>
</dbReference>
<dbReference type="Gene3D" id="3.90.1150.10">
    <property type="entry name" value="Aspartate Aminotransferase, domain 1"/>
    <property type="match status" value="1"/>
</dbReference>
<dbReference type="Gene3D" id="3.40.640.10">
    <property type="entry name" value="Type I PLP-dependent aspartate aminotransferase-like (Major domain)"/>
    <property type="match status" value="1"/>
</dbReference>
<dbReference type="InterPro" id="IPR005814">
    <property type="entry name" value="Aminotrans_3"/>
</dbReference>
<dbReference type="InterPro" id="IPR049704">
    <property type="entry name" value="Aminotrans_3_PPA_site"/>
</dbReference>
<dbReference type="InterPro" id="IPR004637">
    <property type="entry name" value="Dat"/>
</dbReference>
<dbReference type="InterPro" id="IPR012773">
    <property type="entry name" value="Ectoine_EctB"/>
</dbReference>
<dbReference type="InterPro" id="IPR015424">
    <property type="entry name" value="PyrdxlP-dep_Trfase"/>
</dbReference>
<dbReference type="InterPro" id="IPR015421">
    <property type="entry name" value="PyrdxlP-dep_Trfase_major"/>
</dbReference>
<dbReference type="InterPro" id="IPR015422">
    <property type="entry name" value="PyrdxlP-dep_Trfase_small"/>
</dbReference>
<dbReference type="NCBIfam" id="TIGR00709">
    <property type="entry name" value="dat"/>
    <property type="match status" value="1"/>
</dbReference>
<dbReference type="NCBIfam" id="TIGR02407">
    <property type="entry name" value="ectoine_ectB"/>
    <property type="match status" value="1"/>
</dbReference>
<dbReference type="NCBIfam" id="NF006733">
    <property type="entry name" value="PRK09264.1"/>
    <property type="match status" value="1"/>
</dbReference>
<dbReference type="PANTHER" id="PTHR43552">
    <property type="entry name" value="DIAMINOBUTYRATE--2-OXOGLUTARATE AMINOTRANSFERASE"/>
    <property type="match status" value="1"/>
</dbReference>
<dbReference type="PANTHER" id="PTHR43552:SF2">
    <property type="entry name" value="DIAMINOBUTYRATE--2-OXOGLUTARATE TRANSAMINASE"/>
    <property type="match status" value="1"/>
</dbReference>
<dbReference type="Pfam" id="PF00202">
    <property type="entry name" value="Aminotran_3"/>
    <property type="match status" value="1"/>
</dbReference>
<dbReference type="PIRSF" id="PIRSF000521">
    <property type="entry name" value="Transaminase_4ab_Lys_Orn"/>
    <property type="match status" value="1"/>
</dbReference>
<dbReference type="SUPFAM" id="SSF53383">
    <property type="entry name" value="PLP-dependent transferases"/>
    <property type="match status" value="1"/>
</dbReference>
<dbReference type="PROSITE" id="PS00600">
    <property type="entry name" value="AA_TRANSFER_CLASS_3"/>
    <property type="match status" value="1"/>
</dbReference>
<comment type="function">
    <text evidence="1">Catalyzes reversively the conversion of L-aspartate beta-semialdehyde (ASA) to L-2,4-diaminobutyrate (DABA) by transamination with L-glutamate.</text>
</comment>
<comment type="catalytic activity">
    <reaction>
        <text>L-2,4-diaminobutanoate + 2-oxoglutarate = L-aspartate 4-semialdehyde + L-glutamate</text>
        <dbReference type="Rhea" id="RHEA:11160"/>
        <dbReference type="ChEBI" id="CHEBI:16810"/>
        <dbReference type="ChEBI" id="CHEBI:29985"/>
        <dbReference type="ChEBI" id="CHEBI:58761"/>
        <dbReference type="ChEBI" id="CHEBI:537519"/>
        <dbReference type="EC" id="2.6.1.76"/>
    </reaction>
</comment>
<comment type="cofactor">
    <cofactor evidence="1">
        <name>pyridoxal 5'-phosphate</name>
        <dbReference type="ChEBI" id="CHEBI:597326"/>
    </cofactor>
</comment>
<comment type="pathway">
    <text>Amine and polyamine biosynthesis; ectoine biosynthesis; L-ectoine from L-aspartate 4-semialdehyde: step 1/3.</text>
</comment>
<comment type="similarity">
    <text evidence="3">Belongs to the class-III pyridoxal-phosphate-dependent aminotransferase family.</text>
</comment>
<protein>
    <recommendedName>
        <fullName>Diaminobutyrate--2-oxoglutarate transaminase</fullName>
        <ecNumber>2.6.1.76</ecNumber>
    </recommendedName>
    <alternativeName>
        <fullName>DABA aminotransferase</fullName>
    </alternativeName>
    <alternativeName>
        <fullName>Diaminobutyrate--2-oxoglutarate aminotransferase</fullName>
    </alternativeName>
    <alternativeName>
        <fullName>L-2,4-diaminobutyric acid transaminase</fullName>
    </alternativeName>
</protein>
<feature type="chain" id="PRO_0000120529" description="Diaminobutyrate--2-oxoglutarate transaminase">
    <location>
        <begin position="1"/>
        <end position="423"/>
    </location>
</feature>
<feature type="modified residue" description="N6-(pyridoxal phosphate)lysine" evidence="2">
    <location>
        <position position="271"/>
    </location>
</feature>
<evidence type="ECO:0000250" key="1"/>
<evidence type="ECO:0000255" key="2"/>
<evidence type="ECO:0000305" key="3"/>
<proteinExistence type="inferred from homology"/>
<name>ECTB_STRCO</name>
<organism>
    <name type="scientific">Streptomyces coelicolor (strain ATCC BAA-471 / A3(2) / M145)</name>
    <dbReference type="NCBI Taxonomy" id="100226"/>
    <lineage>
        <taxon>Bacteria</taxon>
        <taxon>Bacillati</taxon>
        <taxon>Actinomycetota</taxon>
        <taxon>Actinomycetes</taxon>
        <taxon>Kitasatosporales</taxon>
        <taxon>Streptomycetaceae</taxon>
        <taxon>Streptomyces</taxon>
        <taxon>Streptomyces albidoflavus group</taxon>
    </lineage>
</organism>
<reference key="1">
    <citation type="journal article" date="2002" name="Nature">
        <title>Complete genome sequence of the model actinomycete Streptomyces coelicolor A3(2).</title>
        <authorList>
            <person name="Bentley S.D."/>
            <person name="Chater K.F."/>
            <person name="Cerdeno-Tarraga A.-M."/>
            <person name="Challis G.L."/>
            <person name="Thomson N.R."/>
            <person name="James K.D."/>
            <person name="Harris D.E."/>
            <person name="Quail M.A."/>
            <person name="Kieser H."/>
            <person name="Harper D."/>
            <person name="Bateman A."/>
            <person name="Brown S."/>
            <person name="Chandra G."/>
            <person name="Chen C.W."/>
            <person name="Collins M."/>
            <person name="Cronin A."/>
            <person name="Fraser A."/>
            <person name="Goble A."/>
            <person name="Hidalgo J."/>
            <person name="Hornsby T."/>
            <person name="Howarth S."/>
            <person name="Huang C.-H."/>
            <person name="Kieser T."/>
            <person name="Larke L."/>
            <person name="Murphy L.D."/>
            <person name="Oliver K."/>
            <person name="O'Neil S."/>
            <person name="Rabbinowitsch E."/>
            <person name="Rajandream M.A."/>
            <person name="Rutherford K.M."/>
            <person name="Rutter S."/>
            <person name="Seeger K."/>
            <person name="Saunders D."/>
            <person name="Sharp S."/>
            <person name="Squares R."/>
            <person name="Squares S."/>
            <person name="Taylor K."/>
            <person name="Warren T."/>
            <person name="Wietzorrek A."/>
            <person name="Woodward J.R."/>
            <person name="Barrell B.G."/>
            <person name="Parkhill J."/>
            <person name="Hopwood D.A."/>
        </authorList>
    </citation>
    <scope>NUCLEOTIDE SEQUENCE [LARGE SCALE GENOMIC DNA]</scope>
    <source>
        <strain>ATCC BAA-471 / A3(2) / M145</strain>
    </source>
</reference>
<keyword id="KW-0032">Aminotransferase</keyword>
<keyword id="KW-0663">Pyridoxal phosphate</keyword>
<keyword id="KW-1185">Reference proteome</keyword>
<keyword id="KW-0808">Transferase</keyword>